<feature type="chain" id="PRO_0000178792" description="Lipoprotein signal peptidase">
    <location>
        <begin position="1"/>
        <end position="154"/>
    </location>
</feature>
<feature type="transmembrane region" description="Helical" evidence="1">
    <location>
        <begin position="55"/>
        <end position="75"/>
    </location>
</feature>
<feature type="transmembrane region" description="Helical" evidence="1">
    <location>
        <begin position="84"/>
        <end position="104"/>
    </location>
</feature>
<feature type="transmembrane region" description="Helical" evidence="1">
    <location>
        <begin position="124"/>
        <end position="144"/>
    </location>
</feature>
<feature type="active site" evidence="1">
    <location>
        <position position="111"/>
    </location>
</feature>
<feature type="active site" evidence="1">
    <location>
        <position position="129"/>
    </location>
</feature>
<keyword id="KW-0064">Aspartyl protease</keyword>
<keyword id="KW-1003">Cell membrane</keyword>
<keyword id="KW-0378">Hydrolase</keyword>
<keyword id="KW-0472">Membrane</keyword>
<keyword id="KW-0645">Protease</keyword>
<keyword id="KW-0812">Transmembrane</keyword>
<keyword id="KW-1133">Transmembrane helix</keyword>
<sequence>MYYYLITLAVIALDQLTKWIVVQNMEIGQKIEVIPGFLYWTSYRNDGAAWSILEGHMWFFYLITVVVIGIIIYIMQKYAKGKRLFSISLAFILGGAIGNFIDRVLHQEVVDFVQTVWGNYYFPIFNVADAALSVGVVLMLVYVFVDDRKTKGIK</sequence>
<name>LSPA_LISMF</name>
<dbReference type="EC" id="3.4.23.36" evidence="1"/>
<dbReference type="EMBL" id="AE017262">
    <property type="protein sequence ID" value="AAT04642.1"/>
    <property type="molecule type" value="Genomic_DNA"/>
</dbReference>
<dbReference type="RefSeq" id="WP_003726602.1">
    <property type="nucleotide sequence ID" value="NC_002973.6"/>
</dbReference>
<dbReference type="SMR" id="Q71YH2"/>
<dbReference type="KEGG" id="lmf:LMOf2365_1872"/>
<dbReference type="HOGENOM" id="CLU_083252_3_0_9"/>
<dbReference type="UniPathway" id="UPA00665"/>
<dbReference type="GO" id="GO:0005886">
    <property type="term" value="C:plasma membrane"/>
    <property type="evidence" value="ECO:0007669"/>
    <property type="project" value="UniProtKB-SubCell"/>
</dbReference>
<dbReference type="GO" id="GO:0004190">
    <property type="term" value="F:aspartic-type endopeptidase activity"/>
    <property type="evidence" value="ECO:0007669"/>
    <property type="project" value="UniProtKB-UniRule"/>
</dbReference>
<dbReference type="GO" id="GO:0006508">
    <property type="term" value="P:proteolysis"/>
    <property type="evidence" value="ECO:0007669"/>
    <property type="project" value="UniProtKB-KW"/>
</dbReference>
<dbReference type="HAMAP" id="MF_00161">
    <property type="entry name" value="LspA"/>
    <property type="match status" value="1"/>
</dbReference>
<dbReference type="InterPro" id="IPR001872">
    <property type="entry name" value="Peptidase_A8"/>
</dbReference>
<dbReference type="NCBIfam" id="TIGR00077">
    <property type="entry name" value="lspA"/>
    <property type="match status" value="1"/>
</dbReference>
<dbReference type="PANTHER" id="PTHR33695">
    <property type="entry name" value="LIPOPROTEIN SIGNAL PEPTIDASE"/>
    <property type="match status" value="1"/>
</dbReference>
<dbReference type="PANTHER" id="PTHR33695:SF1">
    <property type="entry name" value="LIPOPROTEIN SIGNAL PEPTIDASE"/>
    <property type="match status" value="1"/>
</dbReference>
<dbReference type="Pfam" id="PF01252">
    <property type="entry name" value="Peptidase_A8"/>
    <property type="match status" value="1"/>
</dbReference>
<dbReference type="PRINTS" id="PR00781">
    <property type="entry name" value="LIPOSIGPTASE"/>
</dbReference>
<dbReference type="PROSITE" id="PS00855">
    <property type="entry name" value="SPASE_II"/>
    <property type="match status" value="1"/>
</dbReference>
<organism>
    <name type="scientific">Listeria monocytogenes serotype 4b (strain F2365)</name>
    <dbReference type="NCBI Taxonomy" id="265669"/>
    <lineage>
        <taxon>Bacteria</taxon>
        <taxon>Bacillati</taxon>
        <taxon>Bacillota</taxon>
        <taxon>Bacilli</taxon>
        <taxon>Bacillales</taxon>
        <taxon>Listeriaceae</taxon>
        <taxon>Listeria</taxon>
    </lineage>
</organism>
<accession>Q71YH2</accession>
<protein>
    <recommendedName>
        <fullName evidence="1">Lipoprotein signal peptidase</fullName>
        <ecNumber evidence="1">3.4.23.36</ecNumber>
    </recommendedName>
    <alternativeName>
        <fullName evidence="1">Prolipoprotein signal peptidase</fullName>
    </alternativeName>
    <alternativeName>
        <fullName evidence="1">Signal peptidase II</fullName>
        <shortName evidence="1">SPase II</shortName>
    </alternativeName>
</protein>
<comment type="function">
    <text evidence="1">This protein specifically catalyzes the removal of signal peptides from prolipoproteins.</text>
</comment>
<comment type="catalytic activity">
    <reaction evidence="1">
        <text>Release of signal peptides from bacterial membrane prolipoproteins. Hydrolyzes -Xaa-Yaa-Zaa-|-(S,diacylglyceryl)Cys-, in which Xaa is hydrophobic (preferably Leu), and Yaa (Ala or Ser) and Zaa (Gly or Ala) have small, neutral side chains.</text>
        <dbReference type="EC" id="3.4.23.36"/>
    </reaction>
</comment>
<comment type="pathway">
    <text evidence="1">Protein modification; lipoprotein biosynthesis (signal peptide cleavage).</text>
</comment>
<comment type="subcellular location">
    <subcellularLocation>
        <location evidence="1">Cell membrane</location>
        <topology evidence="1">Multi-pass membrane protein</topology>
    </subcellularLocation>
</comment>
<comment type="similarity">
    <text evidence="1">Belongs to the peptidase A8 family.</text>
</comment>
<evidence type="ECO:0000255" key="1">
    <source>
        <dbReference type="HAMAP-Rule" id="MF_00161"/>
    </source>
</evidence>
<reference key="1">
    <citation type="journal article" date="2004" name="Nucleic Acids Res.">
        <title>Whole genome comparisons of serotype 4b and 1/2a strains of the food-borne pathogen Listeria monocytogenes reveal new insights into the core genome components of this species.</title>
        <authorList>
            <person name="Nelson K.E."/>
            <person name="Fouts D.E."/>
            <person name="Mongodin E.F."/>
            <person name="Ravel J."/>
            <person name="DeBoy R.T."/>
            <person name="Kolonay J.F."/>
            <person name="Rasko D.A."/>
            <person name="Angiuoli S.V."/>
            <person name="Gill S.R."/>
            <person name="Paulsen I.T."/>
            <person name="Peterson J.D."/>
            <person name="White O."/>
            <person name="Nelson W.C."/>
            <person name="Nierman W.C."/>
            <person name="Beanan M.J."/>
            <person name="Brinkac L.M."/>
            <person name="Daugherty S.C."/>
            <person name="Dodson R.J."/>
            <person name="Durkin A.S."/>
            <person name="Madupu R."/>
            <person name="Haft D.H."/>
            <person name="Selengut J."/>
            <person name="Van Aken S.E."/>
            <person name="Khouri H.M."/>
            <person name="Fedorova N."/>
            <person name="Forberger H.A."/>
            <person name="Tran B."/>
            <person name="Kathariou S."/>
            <person name="Wonderling L.D."/>
            <person name="Uhlich G.A."/>
            <person name="Bayles D.O."/>
            <person name="Luchansky J.B."/>
            <person name="Fraser C.M."/>
        </authorList>
    </citation>
    <scope>NUCLEOTIDE SEQUENCE [LARGE SCALE GENOMIC DNA]</scope>
    <source>
        <strain>F2365</strain>
    </source>
</reference>
<proteinExistence type="inferred from homology"/>
<gene>
    <name evidence="1" type="primary">lspA</name>
    <name type="ordered locus">LMOf2365_1872</name>
</gene>